<organism>
    <name type="scientific">Staphylococcus aureus (strain N315)</name>
    <dbReference type="NCBI Taxonomy" id="158879"/>
    <lineage>
        <taxon>Bacteria</taxon>
        <taxon>Bacillati</taxon>
        <taxon>Bacillota</taxon>
        <taxon>Bacilli</taxon>
        <taxon>Bacillales</taxon>
        <taxon>Staphylococcaceae</taxon>
        <taxon>Staphylococcus</taxon>
    </lineage>
</organism>
<reference key="1">
    <citation type="journal article" date="2001" name="Lancet">
        <title>Whole genome sequencing of meticillin-resistant Staphylococcus aureus.</title>
        <authorList>
            <person name="Kuroda M."/>
            <person name="Ohta T."/>
            <person name="Uchiyama I."/>
            <person name="Baba T."/>
            <person name="Yuzawa H."/>
            <person name="Kobayashi I."/>
            <person name="Cui L."/>
            <person name="Oguchi A."/>
            <person name="Aoki K."/>
            <person name="Nagai Y."/>
            <person name="Lian J.-Q."/>
            <person name="Ito T."/>
            <person name="Kanamori M."/>
            <person name="Matsumaru H."/>
            <person name="Maruyama A."/>
            <person name="Murakami H."/>
            <person name="Hosoyama A."/>
            <person name="Mizutani-Ui Y."/>
            <person name="Takahashi N.K."/>
            <person name="Sawano T."/>
            <person name="Inoue R."/>
            <person name="Kaito C."/>
            <person name="Sekimizu K."/>
            <person name="Hirakawa H."/>
            <person name="Kuhara S."/>
            <person name="Goto S."/>
            <person name="Yabuzaki J."/>
            <person name="Kanehisa M."/>
            <person name="Yamashita A."/>
            <person name="Oshima K."/>
            <person name="Furuya K."/>
            <person name="Yoshino C."/>
            <person name="Shiba T."/>
            <person name="Hattori M."/>
            <person name="Ogasawara N."/>
            <person name="Hayashi H."/>
            <person name="Hiramatsu K."/>
        </authorList>
    </citation>
    <scope>NUCLEOTIDE SEQUENCE [LARGE SCALE GENOMIC DNA]</scope>
    <source>
        <strain>N315</strain>
    </source>
</reference>
<reference key="2">
    <citation type="submission" date="2007-10" db="UniProtKB">
        <title>Shotgun proteomic analysis of total and membrane protein extracts of S. aureus strain N315.</title>
        <authorList>
            <person name="Vaezzadeh A.R."/>
            <person name="Deshusses J."/>
            <person name="Lescuyer P."/>
            <person name="Hochstrasser D.F."/>
        </authorList>
    </citation>
    <scope>IDENTIFICATION BY MASS SPECTROMETRY [LARGE SCALE ANALYSIS]</scope>
    <source>
        <strain>N315</strain>
    </source>
</reference>
<name>Y1564_STAAN</name>
<protein>
    <recommendedName>
        <fullName evidence="1">UPF0354 protein SA1564</fullName>
    </recommendedName>
</protein>
<dbReference type="EMBL" id="BA000018">
    <property type="protein sequence ID" value="BAB42832.1"/>
    <property type="molecule type" value="Genomic_DNA"/>
</dbReference>
<dbReference type="PIR" id="C89959">
    <property type="entry name" value="C89959"/>
</dbReference>
<dbReference type="RefSeq" id="WP_001091387.1">
    <property type="nucleotide sequence ID" value="NC_002745.2"/>
</dbReference>
<dbReference type="EnsemblBacteria" id="BAB42832">
    <property type="protein sequence ID" value="BAB42832"/>
    <property type="gene ID" value="BAB42832"/>
</dbReference>
<dbReference type="KEGG" id="sau:SA1564"/>
<dbReference type="HOGENOM" id="CLU_085634_0_0_9"/>
<dbReference type="HAMAP" id="MF_01548">
    <property type="entry name" value="UPF0354"/>
    <property type="match status" value="1"/>
</dbReference>
<dbReference type="InterPro" id="IPR010838">
    <property type="entry name" value="DUF1444"/>
</dbReference>
<dbReference type="NCBIfam" id="NF010189">
    <property type="entry name" value="PRK13668.1"/>
    <property type="match status" value="1"/>
</dbReference>
<dbReference type="Pfam" id="PF07285">
    <property type="entry name" value="DUF1444"/>
    <property type="match status" value="1"/>
</dbReference>
<dbReference type="PIRSF" id="PIRSF012562">
    <property type="entry name" value="UCP012562"/>
    <property type="match status" value="1"/>
</dbReference>
<gene>
    <name type="ordered locus">SA1564</name>
</gene>
<feature type="chain" id="PRO_0000171112" description="UPF0354 protein SA1564">
    <location>
        <begin position="1"/>
        <end position="285"/>
    </location>
</feature>
<evidence type="ECO:0000255" key="1">
    <source>
        <dbReference type="HAMAP-Rule" id="MF_01548"/>
    </source>
</evidence>
<proteinExistence type="evidence at protein level"/>
<accession>Q7A528</accession>
<sequence>MNTFQMRDKLKERLSHLDVDFKFNREEETLRIYRTDNNKGITIKLNAIVAKYEDKKEKIVDEIVYYVDEAIAQMADKTLESISSSQIMPVIRATSFDKKTKQGVPFIYDEHTAETAVYYAVDLGKSYRLIDESMLEDLKLTEQQIREMSLFNVRKLSNSYTTDEVKGNIFYFINSNDGYDASRILNTAFLNEIEAQCQGEMLVAVPHQDVLIIADIRNKTGYDVMAHLTMEFFTKGLVPITSLSFGYKQGHLEPIFILGKNNKQKRDPNVIQRLEANRRKFNKDK</sequence>
<comment type="similarity">
    <text evidence="1">Belongs to the UPF0354 family.</text>
</comment>